<keyword id="KW-0687">Ribonucleoprotein</keyword>
<keyword id="KW-0689">Ribosomal protein</keyword>
<keyword id="KW-0694">RNA-binding</keyword>
<keyword id="KW-0699">rRNA-binding</keyword>
<organism>
    <name type="scientific">Buchnera aphidicola subsp. Acyrthosiphon pisum (strain 5A)</name>
    <dbReference type="NCBI Taxonomy" id="563178"/>
    <lineage>
        <taxon>Bacteria</taxon>
        <taxon>Pseudomonadati</taxon>
        <taxon>Pseudomonadota</taxon>
        <taxon>Gammaproteobacteria</taxon>
        <taxon>Enterobacterales</taxon>
        <taxon>Erwiniaceae</taxon>
        <taxon>Buchnera</taxon>
    </lineage>
</organism>
<sequence>MGQKVHPNGMRLGIIKKWNSVWFANTKDFADHLDSDYKVRQFLMKTLEKASISRIIIERPAKSIRVTIYTARPGIVIGKKGEDVEKLRISIAKITGVPVQINISEVRKPELDAKLVSDSITSQLERRVMFRRAMKRSVQNAMRQGAKGIKVEVSGRLGGAEIARREWYREGRVPLHTLRANIDYSISEAHTTYGVIGVKVWIFKGEILGGMETVERLDKPSIQTKKQYRKNRK</sequence>
<evidence type="ECO:0000255" key="1">
    <source>
        <dbReference type="HAMAP-Rule" id="MF_01309"/>
    </source>
</evidence>
<evidence type="ECO:0000305" key="2"/>
<feature type="chain" id="PRO_1000165482" description="Small ribosomal subunit protein uS3">
    <location>
        <begin position="1"/>
        <end position="233"/>
    </location>
</feature>
<feature type="domain" description="KH type-2" evidence="1">
    <location>
        <begin position="39"/>
        <end position="107"/>
    </location>
</feature>
<proteinExistence type="inferred from homology"/>
<dbReference type="EMBL" id="CP001161">
    <property type="protein sequence ID" value="ACL30862.1"/>
    <property type="molecule type" value="Genomic_DNA"/>
</dbReference>
<dbReference type="RefSeq" id="WP_009874469.1">
    <property type="nucleotide sequence ID" value="NC_011833.1"/>
</dbReference>
<dbReference type="SMR" id="B8D9U1"/>
<dbReference type="KEGG" id="bap:BUAP5A_511"/>
<dbReference type="HOGENOM" id="CLU_058591_0_2_6"/>
<dbReference type="OrthoDB" id="9806396at2"/>
<dbReference type="Proteomes" id="UP000006904">
    <property type="component" value="Chromosome"/>
</dbReference>
<dbReference type="GO" id="GO:0022627">
    <property type="term" value="C:cytosolic small ribosomal subunit"/>
    <property type="evidence" value="ECO:0007669"/>
    <property type="project" value="TreeGrafter"/>
</dbReference>
<dbReference type="GO" id="GO:0003729">
    <property type="term" value="F:mRNA binding"/>
    <property type="evidence" value="ECO:0007669"/>
    <property type="project" value="UniProtKB-UniRule"/>
</dbReference>
<dbReference type="GO" id="GO:0019843">
    <property type="term" value="F:rRNA binding"/>
    <property type="evidence" value="ECO:0007669"/>
    <property type="project" value="UniProtKB-UniRule"/>
</dbReference>
<dbReference type="GO" id="GO:0003735">
    <property type="term" value="F:structural constituent of ribosome"/>
    <property type="evidence" value="ECO:0007669"/>
    <property type="project" value="InterPro"/>
</dbReference>
<dbReference type="GO" id="GO:0006412">
    <property type="term" value="P:translation"/>
    <property type="evidence" value="ECO:0007669"/>
    <property type="project" value="UniProtKB-UniRule"/>
</dbReference>
<dbReference type="CDD" id="cd02412">
    <property type="entry name" value="KH-II_30S_S3"/>
    <property type="match status" value="1"/>
</dbReference>
<dbReference type="FunFam" id="3.30.1140.32:FF:000001">
    <property type="entry name" value="30S ribosomal protein S3"/>
    <property type="match status" value="1"/>
</dbReference>
<dbReference type="FunFam" id="3.30.300.20:FF:000001">
    <property type="entry name" value="30S ribosomal protein S3"/>
    <property type="match status" value="1"/>
</dbReference>
<dbReference type="Gene3D" id="3.30.300.20">
    <property type="match status" value="1"/>
</dbReference>
<dbReference type="Gene3D" id="3.30.1140.32">
    <property type="entry name" value="Ribosomal protein S3, C-terminal domain"/>
    <property type="match status" value="1"/>
</dbReference>
<dbReference type="HAMAP" id="MF_01309_B">
    <property type="entry name" value="Ribosomal_uS3_B"/>
    <property type="match status" value="1"/>
</dbReference>
<dbReference type="InterPro" id="IPR004087">
    <property type="entry name" value="KH_dom"/>
</dbReference>
<dbReference type="InterPro" id="IPR015946">
    <property type="entry name" value="KH_dom-like_a/b"/>
</dbReference>
<dbReference type="InterPro" id="IPR004044">
    <property type="entry name" value="KH_dom_type_2"/>
</dbReference>
<dbReference type="InterPro" id="IPR009019">
    <property type="entry name" value="KH_sf_prok-type"/>
</dbReference>
<dbReference type="InterPro" id="IPR036419">
    <property type="entry name" value="Ribosomal_S3_C_sf"/>
</dbReference>
<dbReference type="InterPro" id="IPR005704">
    <property type="entry name" value="Ribosomal_uS3_bac-typ"/>
</dbReference>
<dbReference type="InterPro" id="IPR001351">
    <property type="entry name" value="Ribosomal_uS3_C"/>
</dbReference>
<dbReference type="InterPro" id="IPR018280">
    <property type="entry name" value="Ribosomal_uS3_CS"/>
</dbReference>
<dbReference type="NCBIfam" id="TIGR01009">
    <property type="entry name" value="rpsC_bact"/>
    <property type="match status" value="1"/>
</dbReference>
<dbReference type="PANTHER" id="PTHR11760">
    <property type="entry name" value="30S/40S RIBOSOMAL PROTEIN S3"/>
    <property type="match status" value="1"/>
</dbReference>
<dbReference type="PANTHER" id="PTHR11760:SF19">
    <property type="entry name" value="SMALL RIBOSOMAL SUBUNIT PROTEIN US3C"/>
    <property type="match status" value="1"/>
</dbReference>
<dbReference type="Pfam" id="PF07650">
    <property type="entry name" value="KH_2"/>
    <property type="match status" value="1"/>
</dbReference>
<dbReference type="Pfam" id="PF00189">
    <property type="entry name" value="Ribosomal_S3_C"/>
    <property type="match status" value="1"/>
</dbReference>
<dbReference type="SMART" id="SM00322">
    <property type="entry name" value="KH"/>
    <property type="match status" value="1"/>
</dbReference>
<dbReference type="SUPFAM" id="SSF54814">
    <property type="entry name" value="Prokaryotic type KH domain (KH-domain type II)"/>
    <property type="match status" value="1"/>
</dbReference>
<dbReference type="SUPFAM" id="SSF54821">
    <property type="entry name" value="Ribosomal protein S3 C-terminal domain"/>
    <property type="match status" value="1"/>
</dbReference>
<dbReference type="PROSITE" id="PS50823">
    <property type="entry name" value="KH_TYPE_2"/>
    <property type="match status" value="1"/>
</dbReference>
<dbReference type="PROSITE" id="PS00548">
    <property type="entry name" value="RIBOSOMAL_S3"/>
    <property type="match status" value="1"/>
</dbReference>
<gene>
    <name evidence="1" type="primary">rpsC</name>
    <name type="ordered locus">BUAP5A_511</name>
</gene>
<reference key="1">
    <citation type="journal article" date="2009" name="Science">
        <title>The dynamics and time scale of ongoing genomic erosion in symbiotic bacteria.</title>
        <authorList>
            <person name="Moran N.A."/>
            <person name="McLaughlin H.J."/>
            <person name="Sorek R."/>
        </authorList>
    </citation>
    <scope>NUCLEOTIDE SEQUENCE [LARGE SCALE GENOMIC DNA]</scope>
    <source>
        <strain>5A</strain>
    </source>
</reference>
<name>RS3_BUCA5</name>
<protein>
    <recommendedName>
        <fullName evidence="1">Small ribosomal subunit protein uS3</fullName>
    </recommendedName>
    <alternativeName>
        <fullName evidence="2">30S ribosomal protein S3</fullName>
    </alternativeName>
</protein>
<accession>B8D9U1</accession>
<comment type="function">
    <text evidence="1">Binds the lower part of the 30S subunit head. Binds mRNA in the 70S ribosome, positioning it for translation.</text>
</comment>
<comment type="subunit">
    <text evidence="1">Part of the 30S ribosomal subunit. Forms a tight complex with proteins S10 and S14.</text>
</comment>
<comment type="similarity">
    <text evidence="1">Belongs to the universal ribosomal protein uS3 family.</text>
</comment>